<reference key="1">
    <citation type="journal article" date="2000" name="Nucleic Acids Res.">
        <title>Complete genome sequence of the alkaliphilic bacterium Bacillus halodurans and genomic sequence comparison with Bacillus subtilis.</title>
        <authorList>
            <person name="Takami H."/>
            <person name="Nakasone K."/>
            <person name="Takaki Y."/>
            <person name="Maeno G."/>
            <person name="Sasaki R."/>
            <person name="Masui N."/>
            <person name="Fuji F."/>
            <person name="Hirama C."/>
            <person name="Nakamura Y."/>
            <person name="Ogasawara N."/>
            <person name="Kuhara S."/>
            <person name="Horikoshi K."/>
        </authorList>
    </citation>
    <scope>NUCLEOTIDE SEQUENCE [LARGE SCALE GENOMIC DNA]</scope>
    <source>
        <strain>ATCC BAA-125 / DSM 18197 / FERM 7344 / JCM 9153 / C-125</strain>
    </source>
</reference>
<evidence type="ECO:0000250" key="1">
    <source>
        <dbReference type="UniProtKB" id="P24182"/>
    </source>
</evidence>
<evidence type="ECO:0000255" key="2">
    <source>
        <dbReference type="PROSITE-ProRule" id="PRU00409"/>
    </source>
</evidence>
<evidence type="ECO:0000305" key="3"/>
<dbReference type="EC" id="6.3.4.14" evidence="1"/>
<dbReference type="EMBL" id="BA000004">
    <property type="protein sequence ID" value="BAB04851.1"/>
    <property type="molecule type" value="Genomic_DNA"/>
</dbReference>
<dbReference type="PIR" id="D83791">
    <property type="entry name" value="D83791"/>
</dbReference>
<dbReference type="RefSeq" id="WP_010897302.1">
    <property type="nucleotide sequence ID" value="NC_002570.2"/>
</dbReference>
<dbReference type="SMR" id="Q9KDS9"/>
<dbReference type="STRING" id="272558.gene:10727026"/>
<dbReference type="KEGG" id="bha:BH1132"/>
<dbReference type="eggNOG" id="COG0439">
    <property type="taxonomic scope" value="Bacteria"/>
</dbReference>
<dbReference type="HOGENOM" id="CLU_000395_3_2_9"/>
<dbReference type="OrthoDB" id="9807469at2"/>
<dbReference type="UniPathway" id="UPA00655">
    <property type="reaction ID" value="UER00711"/>
</dbReference>
<dbReference type="Proteomes" id="UP000001258">
    <property type="component" value="Chromosome"/>
</dbReference>
<dbReference type="GO" id="GO:0003989">
    <property type="term" value="F:acetyl-CoA carboxylase activity"/>
    <property type="evidence" value="ECO:0007669"/>
    <property type="project" value="UniProtKB-EC"/>
</dbReference>
<dbReference type="GO" id="GO:0005524">
    <property type="term" value="F:ATP binding"/>
    <property type="evidence" value="ECO:0007669"/>
    <property type="project" value="UniProtKB-KW"/>
</dbReference>
<dbReference type="GO" id="GO:0004075">
    <property type="term" value="F:biotin carboxylase activity"/>
    <property type="evidence" value="ECO:0007669"/>
    <property type="project" value="UniProtKB-EC"/>
</dbReference>
<dbReference type="GO" id="GO:0046872">
    <property type="term" value="F:metal ion binding"/>
    <property type="evidence" value="ECO:0007669"/>
    <property type="project" value="UniProtKB-KW"/>
</dbReference>
<dbReference type="GO" id="GO:0006633">
    <property type="term" value="P:fatty acid biosynthetic process"/>
    <property type="evidence" value="ECO:0007669"/>
    <property type="project" value="UniProtKB-KW"/>
</dbReference>
<dbReference type="GO" id="GO:2001295">
    <property type="term" value="P:malonyl-CoA biosynthetic process"/>
    <property type="evidence" value="ECO:0007669"/>
    <property type="project" value="UniProtKB-UniPathway"/>
</dbReference>
<dbReference type="FunFam" id="3.30.1490.20:FF:000003">
    <property type="entry name" value="acetyl-CoA carboxylase isoform X1"/>
    <property type="match status" value="1"/>
</dbReference>
<dbReference type="FunFam" id="3.30.470.20:FF:000028">
    <property type="entry name" value="Methylcrotonoyl-CoA carboxylase subunit alpha, mitochondrial"/>
    <property type="match status" value="1"/>
</dbReference>
<dbReference type="FunFam" id="3.40.50.20:FF:000010">
    <property type="entry name" value="Propionyl-CoA carboxylase subunit alpha"/>
    <property type="match status" value="1"/>
</dbReference>
<dbReference type="Gene3D" id="3.30.470.20">
    <property type="entry name" value="ATP-grasp fold, B domain"/>
    <property type="match status" value="1"/>
</dbReference>
<dbReference type="InterPro" id="IPR011761">
    <property type="entry name" value="ATP-grasp"/>
</dbReference>
<dbReference type="InterPro" id="IPR005481">
    <property type="entry name" value="BC-like_N"/>
</dbReference>
<dbReference type="InterPro" id="IPR050856">
    <property type="entry name" value="Biotin_carboxylase_complex"/>
</dbReference>
<dbReference type="InterPro" id="IPR011764">
    <property type="entry name" value="Biotin_carboxylation_dom"/>
</dbReference>
<dbReference type="InterPro" id="IPR005482">
    <property type="entry name" value="Biotin_COase_C"/>
</dbReference>
<dbReference type="InterPro" id="IPR005479">
    <property type="entry name" value="CbamoylP_synth_lsu-like_ATP-bd"/>
</dbReference>
<dbReference type="InterPro" id="IPR016185">
    <property type="entry name" value="PreATP-grasp_dom_sf"/>
</dbReference>
<dbReference type="InterPro" id="IPR011054">
    <property type="entry name" value="Rudment_hybrid_motif"/>
</dbReference>
<dbReference type="NCBIfam" id="NF006367">
    <property type="entry name" value="PRK08591.1"/>
    <property type="match status" value="1"/>
</dbReference>
<dbReference type="PANTHER" id="PTHR18866">
    <property type="entry name" value="CARBOXYLASE:PYRUVATE/ACETYL-COA/PROPIONYL-COA CARBOXYLASE"/>
    <property type="match status" value="1"/>
</dbReference>
<dbReference type="PANTHER" id="PTHR18866:SF33">
    <property type="entry name" value="METHYLCROTONOYL-COA CARBOXYLASE SUBUNIT ALPHA, MITOCHONDRIAL-RELATED"/>
    <property type="match status" value="1"/>
</dbReference>
<dbReference type="Pfam" id="PF02785">
    <property type="entry name" value="Biotin_carb_C"/>
    <property type="match status" value="1"/>
</dbReference>
<dbReference type="Pfam" id="PF00289">
    <property type="entry name" value="Biotin_carb_N"/>
    <property type="match status" value="1"/>
</dbReference>
<dbReference type="Pfam" id="PF02786">
    <property type="entry name" value="CPSase_L_D2"/>
    <property type="match status" value="1"/>
</dbReference>
<dbReference type="SMART" id="SM00878">
    <property type="entry name" value="Biotin_carb_C"/>
    <property type="match status" value="1"/>
</dbReference>
<dbReference type="SUPFAM" id="SSF56059">
    <property type="entry name" value="Glutathione synthetase ATP-binding domain-like"/>
    <property type="match status" value="1"/>
</dbReference>
<dbReference type="SUPFAM" id="SSF52440">
    <property type="entry name" value="PreATP-grasp domain"/>
    <property type="match status" value="1"/>
</dbReference>
<dbReference type="SUPFAM" id="SSF51246">
    <property type="entry name" value="Rudiment single hybrid motif"/>
    <property type="match status" value="1"/>
</dbReference>
<dbReference type="PROSITE" id="PS50975">
    <property type="entry name" value="ATP_GRASP"/>
    <property type="match status" value="1"/>
</dbReference>
<dbReference type="PROSITE" id="PS50979">
    <property type="entry name" value="BC"/>
    <property type="match status" value="1"/>
</dbReference>
<dbReference type="PROSITE" id="PS00866">
    <property type="entry name" value="CPSASE_1"/>
    <property type="match status" value="1"/>
</dbReference>
<dbReference type="PROSITE" id="PS00867">
    <property type="entry name" value="CPSASE_2"/>
    <property type="match status" value="1"/>
</dbReference>
<organism>
    <name type="scientific">Halalkalibacterium halodurans (strain ATCC BAA-125 / DSM 18197 / FERM 7344 / JCM 9153 / C-125)</name>
    <name type="common">Bacillus halodurans</name>
    <dbReference type="NCBI Taxonomy" id="272558"/>
    <lineage>
        <taxon>Bacteria</taxon>
        <taxon>Bacillati</taxon>
        <taxon>Bacillota</taxon>
        <taxon>Bacilli</taxon>
        <taxon>Bacillales</taxon>
        <taxon>Bacillaceae</taxon>
        <taxon>Halalkalibacterium (ex Joshi et al. 2022)</taxon>
    </lineage>
</organism>
<comment type="function">
    <text evidence="1">This protein is a component of the acetyl coenzyme A carboxylase complex; first, biotin carboxylase catalyzes the carboxylation of the carrier protein and then the transcarboxylase transfers the carboxyl group to form malonyl-CoA.</text>
</comment>
<comment type="catalytic activity">
    <reaction evidence="1">
        <text>N(6)-biotinyl-L-lysyl-[protein] + hydrogencarbonate + ATP = N(6)-carboxybiotinyl-L-lysyl-[protein] + ADP + phosphate + H(+)</text>
        <dbReference type="Rhea" id="RHEA:13501"/>
        <dbReference type="Rhea" id="RHEA-COMP:10505"/>
        <dbReference type="Rhea" id="RHEA-COMP:10506"/>
        <dbReference type="ChEBI" id="CHEBI:15378"/>
        <dbReference type="ChEBI" id="CHEBI:17544"/>
        <dbReference type="ChEBI" id="CHEBI:30616"/>
        <dbReference type="ChEBI" id="CHEBI:43474"/>
        <dbReference type="ChEBI" id="CHEBI:83144"/>
        <dbReference type="ChEBI" id="CHEBI:83145"/>
        <dbReference type="ChEBI" id="CHEBI:456216"/>
        <dbReference type="EC" id="6.3.4.14"/>
    </reaction>
</comment>
<comment type="cofactor">
    <cofactor evidence="2">
        <name>Mg(2+)</name>
        <dbReference type="ChEBI" id="CHEBI:18420"/>
    </cofactor>
    <cofactor evidence="2">
        <name>Mn(2+)</name>
        <dbReference type="ChEBI" id="CHEBI:29035"/>
    </cofactor>
    <text evidence="2">Binds 2 magnesium or manganese ions per subunit.</text>
</comment>
<comment type="pathway">
    <text evidence="1">Lipid metabolism; malonyl-CoA biosynthesis; malonyl-CoA from acetyl-CoA: step 1/1.</text>
</comment>
<comment type="subunit">
    <text evidence="1">Acetyl-CoA carboxylase is a heterohexamer of biotin carboxyl carrier protein, biotin carboxylase and the two subunits of carboxyl transferase in a 2:2 complex.</text>
</comment>
<keyword id="KW-0067">ATP-binding</keyword>
<keyword id="KW-0092">Biotin</keyword>
<keyword id="KW-0275">Fatty acid biosynthesis</keyword>
<keyword id="KW-0276">Fatty acid metabolism</keyword>
<keyword id="KW-0436">Ligase</keyword>
<keyword id="KW-0444">Lipid biosynthesis</keyword>
<keyword id="KW-0443">Lipid metabolism</keyword>
<keyword id="KW-0460">Magnesium</keyword>
<keyword id="KW-0464">Manganese</keyword>
<keyword id="KW-0479">Metal-binding</keyword>
<keyword id="KW-0547">Nucleotide-binding</keyword>
<keyword id="KW-1185">Reference proteome</keyword>
<proteinExistence type="inferred from homology"/>
<accession>Q9KDS9</accession>
<sequence>MFKKVLIANRGEIAVRIIRTCQKLNIRTVAIYSEADVDSLHVKHADEAFLIGKPPVAESYLKVDTILEVAKQAGVDAIHPGYGLLSENARFARACVEAGISFIGPSPEVIERMGSKIAARTAMQTAGVPVIPGSDVALADEEEAVHLARKFGYPVMLKASAGGGGIGMQLVRNDEEMRKAFAGNQKRATSFFGDGTMFLEKAVENPRHIEVQIAADHHGHVVHLWERDCSIQRRHQKVVEEAPSPFVDEALREKIGQLAVKAAKAIDYRNLGTVECLVDGEKNIYFLEMNTRLQVEHPVTEEITGIDLVEWQLLIAAGEQLPYAQHEIPLQGHAIEVRIYAEDPVTFFPSPGMIKRFTLPEGEGIRHEYAISEGYKVTPFYDPMVAKLIVSADTRGEAIQRLGRALKQYEIEGIKTNIPMLKQVINHPVFQAGEATTAFVTNHLKVKTGRNP</sequence>
<protein>
    <recommendedName>
        <fullName>Biotin carboxylase</fullName>
        <ecNumber evidence="1">6.3.4.14</ecNumber>
    </recommendedName>
    <alternativeName>
        <fullName evidence="3">Acetyl-coenzyme A carboxylase biotin carboxylase subunit A</fullName>
    </alternativeName>
</protein>
<feature type="chain" id="PRO_0000146788" description="Biotin carboxylase">
    <location>
        <begin position="1"/>
        <end position="452"/>
    </location>
</feature>
<feature type="domain" description="Biotin carboxylation">
    <location>
        <begin position="1"/>
        <end position="445"/>
    </location>
</feature>
<feature type="domain" description="ATP-grasp" evidence="2">
    <location>
        <begin position="120"/>
        <end position="317"/>
    </location>
</feature>
<feature type="active site" evidence="1">
    <location>
        <position position="292"/>
    </location>
</feature>
<feature type="binding site" evidence="1">
    <location>
        <position position="116"/>
    </location>
    <ligand>
        <name>ATP</name>
        <dbReference type="ChEBI" id="CHEBI:30616"/>
    </ligand>
</feature>
<feature type="binding site" evidence="1">
    <location>
        <position position="158"/>
    </location>
    <ligand>
        <name>ATP</name>
        <dbReference type="ChEBI" id="CHEBI:30616"/>
    </ligand>
</feature>
<feature type="binding site" evidence="1">
    <location>
        <begin position="164"/>
        <end position="165"/>
    </location>
    <ligand>
        <name>ATP</name>
        <dbReference type="ChEBI" id="CHEBI:30616"/>
    </ligand>
</feature>
<feature type="binding site" evidence="1">
    <location>
        <begin position="200"/>
        <end position="203"/>
    </location>
    <ligand>
        <name>ATP</name>
        <dbReference type="ChEBI" id="CHEBI:30616"/>
    </ligand>
</feature>
<feature type="binding site" evidence="1">
    <location>
        <position position="208"/>
    </location>
    <ligand>
        <name>ATP</name>
        <dbReference type="ChEBI" id="CHEBI:30616"/>
    </ligand>
</feature>
<feature type="binding site" evidence="1">
    <location>
        <position position="235"/>
    </location>
    <ligand>
        <name>ATP</name>
        <dbReference type="ChEBI" id="CHEBI:30616"/>
    </ligand>
</feature>
<feature type="binding site" evidence="1">
    <location>
        <position position="237"/>
    </location>
    <ligand>
        <name>hydrogencarbonate</name>
        <dbReference type="ChEBI" id="CHEBI:17544"/>
    </ligand>
</feature>
<feature type="binding site" evidence="1">
    <location>
        <position position="275"/>
    </location>
    <ligand>
        <name>ATP</name>
        <dbReference type="ChEBI" id="CHEBI:30616"/>
    </ligand>
</feature>
<feature type="binding site" evidence="2">
    <location>
        <position position="275"/>
    </location>
    <ligand>
        <name>Mg(2+)</name>
        <dbReference type="ChEBI" id="CHEBI:18420"/>
        <label>1</label>
    </ligand>
</feature>
<feature type="binding site" evidence="2">
    <location>
        <position position="275"/>
    </location>
    <ligand>
        <name>Mn(2+)</name>
        <dbReference type="ChEBI" id="CHEBI:29035"/>
        <label>1</label>
    </ligand>
</feature>
<feature type="binding site" evidence="1">
    <location>
        <position position="288"/>
    </location>
    <ligand>
        <name>ATP</name>
        <dbReference type="ChEBI" id="CHEBI:30616"/>
    </ligand>
</feature>
<feature type="binding site" evidence="2">
    <location>
        <position position="288"/>
    </location>
    <ligand>
        <name>Mg(2+)</name>
        <dbReference type="ChEBI" id="CHEBI:18420"/>
        <label>1</label>
    </ligand>
</feature>
<feature type="binding site" evidence="2">
    <location>
        <position position="288"/>
    </location>
    <ligand>
        <name>Mg(2+)</name>
        <dbReference type="ChEBI" id="CHEBI:18420"/>
        <label>2</label>
    </ligand>
</feature>
<feature type="binding site" evidence="2">
    <location>
        <position position="288"/>
    </location>
    <ligand>
        <name>Mn(2+)</name>
        <dbReference type="ChEBI" id="CHEBI:29035"/>
        <label>1</label>
    </ligand>
</feature>
<feature type="binding site" evidence="2">
    <location>
        <position position="288"/>
    </location>
    <ligand>
        <name>Mn(2+)</name>
        <dbReference type="ChEBI" id="CHEBI:29035"/>
        <label>2</label>
    </ligand>
</feature>
<feature type="binding site" evidence="2">
    <location>
        <position position="290"/>
    </location>
    <ligand>
        <name>Mg(2+)</name>
        <dbReference type="ChEBI" id="CHEBI:18420"/>
        <label>2</label>
    </ligand>
</feature>
<feature type="binding site" evidence="2">
    <location>
        <position position="290"/>
    </location>
    <ligand>
        <name>Mn(2+)</name>
        <dbReference type="ChEBI" id="CHEBI:29035"/>
        <label>2</label>
    </ligand>
</feature>
<feature type="binding site" evidence="1">
    <location>
        <position position="292"/>
    </location>
    <ligand>
        <name>hydrogencarbonate</name>
        <dbReference type="ChEBI" id="CHEBI:17544"/>
    </ligand>
</feature>
<feature type="binding site" evidence="1">
    <location>
        <position position="295"/>
    </location>
    <ligand>
        <name>hydrogencarbonate</name>
        <dbReference type="ChEBI" id="CHEBI:17544"/>
    </ligand>
</feature>
<feature type="binding site" evidence="1">
    <location>
        <position position="338"/>
    </location>
    <ligand>
        <name>biotin</name>
        <dbReference type="ChEBI" id="CHEBI:57586"/>
    </ligand>
</feature>
<feature type="binding site" evidence="1">
    <location>
        <position position="338"/>
    </location>
    <ligand>
        <name>hydrogencarbonate</name>
        <dbReference type="ChEBI" id="CHEBI:17544"/>
    </ligand>
</feature>
<gene>
    <name type="primary">accC</name>
    <name type="ordered locus">BH1132</name>
</gene>
<name>ACCC_HALH5</name>